<gene>
    <name evidence="1" type="primary">kdpA</name>
    <name type="ordered locus">UTI89_C0702</name>
</gene>
<protein>
    <recommendedName>
        <fullName evidence="1">Potassium-transporting ATPase potassium-binding subunit</fullName>
    </recommendedName>
    <alternativeName>
        <fullName evidence="1">ATP phosphohydrolase [potassium-transporting] A chain</fullName>
    </alternativeName>
    <alternativeName>
        <fullName evidence="1">Potassium-binding and translocating subunit A</fullName>
    </alternativeName>
    <alternativeName>
        <fullName evidence="1">Potassium-translocating ATPase A chain</fullName>
    </alternativeName>
</protein>
<organism>
    <name type="scientific">Escherichia coli (strain UTI89 / UPEC)</name>
    <dbReference type="NCBI Taxonomy" id="364106"/>
    <lineage>
        <taxon>Bacteria</taxon>
        <taxon>Pseudomonadati</taxon>
        <taxon>Pseudomonadota</taxon>
        <taxon>Gammaproteobacteria</taxon>
        <taxon>Enterobacterales</taxon>
        <taxon>Enterobacteriaceae</taxon>
        <taxon>Escherichia</taxon>
    </lineage>
</organism>
<comment type="function">
    <text evidence="1">Part of the high-affinity ATP-driven potassium transport (or Kdp) system, which catalyzes the hydrolysis of ATP coupled with the electrogenic transport of potassium into the cytoplasm. This subunit binds the periplasmic potassium ions and delivers the ions to the membrane domain of KdpB through an intramembrane tunnel.</text>
</comment>
<comment type="subunit">
    <text evidence="1">The system is composed of three essential subunits: KdpA, KdpB and KdpC.</text>
</comment>
<comment type="subcellular location">
    <subcellularLocation>
        <location evidence="1">Cell inner membrane</location>
        <topology evidence="1">Multi-pass membrane protein</topology>
    </subcellularLocation>
</comment>
<comment type="similarity">
    <text evidence="1">Belongs to the KdpA family.</text>
</comment>
<evidence type="ECO:0000255" key="1">
    <source>
        <dbReference type="HAMAP-Rule" id="MF_00275"/>
    </source>
</evidence>
<sequence length="557" mass="59052">MAAQGFLLIATFLLVFMVLARPLGSGLARLINDIPLPGTTGVERVLFSALGVSDREMNWKQYLSAILGLNILGLAVLFFMLLGQHYLPLNPQQLPGLSWDLALNTAVSFVTNTNWQSYSGETTLSYFSQMAGLTVQNFLSAASGIAVIFALIRAFTRQSMNTLGNAWVDLLRITLWVLTPVALLIALFFIQQGALQNFLPYQAVTTIEGAQQLLPMGPVASQEAIKMLGTNGGGFFNANSSHPFENPTALTNFVQMLAIFLIPTALCFAFGEVAGDRRQGRMLLWAMSVIFVICVGVVMWAEVQGNPHLLALGADSSINMEGKESRFGVLVSSLFAVVTTAASCGAVIAMHDSFTALGGMVPMWLMQIGEVVFGGVGSGLYGMMLFVLLAVFIAGLMIGRTPEYLGKKIDVREMKLTALAILVTPTLVLMGAALAMMTDAGRSAMLNPGPHGFSEVLYAVSSAANNNGSAFAGLSANSPFWNCLLALCMFVGRFGVIIPVMAIAGSLVSKKSQPASSGTLPTHGPLFVGLLIGTVLLVGALTFIPALALGPVAEYLS</sequence>
<reference key="1">
    <citation type="journal article" date="2006" name="Proc. Natl. Acad. Sci. U.S.A.">
        <title>Identification of genes subject to positive selection in uropathogenic strains of Escherichia coli: a comparative genomics approach.</title>
        <authorList>
            <person name="Chen S.L."/>
            <person name="Hung C.-S."/>
            <person name="Xu J."/>
            <person name="Reigstad C.S."/>
            <person name="Magrini V."/>
            <person name="Sabo A."/>
            <person name="Blasiar D."/>
            <person name="Bieri T."/>
            <person name="Meyer R.R."/>
            <person name="Ozersky P."/>
            <person name="Armstrong J.R."/>
            <person name="Fulton R.S."/>
            <person name="Latreille J.P."/>
            <person name="Spieth J."/>
            <person name="Hooton T.M."/>
            <person name="Mardis E.R."/>
            <person name="Hultgren S.J."/>
            <person name="Gordon J.I."/>
        </authorList>
    </citation>
    <scope>NUCLEOTIDE SEQUENCE [LARGE SCALE GENOMIC DNA]</scope>
    <source>
        <strain>UTI89 / UPEC</strain>
    </source>
</reference>
<dbReference type="EMBL" id="CP000243">
    <property type="protein sequence ID" value="ABE06195.1"/>
    <property type="molecule type" value="Genomic_DNA"/>
</dbReference>
<dbReference type="RefSeq" id="WP_000730081.1">
    <property type="nucleotide sequence ID" value="NZ_CP064825.1"/>
</dbReference>
<dbReference type="SMR" id="Q1REL9"/>
<dbReference type="KEGG" id="eci:UTI89_C0702"/>
<dbReference type="HOGENOM" id="CLU_018614_3_0_6"/>
<dbReference type="Proteomes" id="UP000001952">
    <property type="component" value="Chromosome"/>
</dbReference>
<dbReference type="GO" id="GO:0005886">
    <property type="term" value="C:plasma membrane"/>
    <property type="evidence" value="ECO:0007669"/>
    <property type="project" value="UniProtKB-SubCell"/>
</dbReference>
<dbReference type="GO" id="GO:0008556">
    <property type="term" value="F:P-type potassium transmembrane transporter activity"/>
    <property type="evidence" value="ECO:0007669"/>
    <property type="project" value="InterPro"/>
</dbReference>
<dbReference type="GO" id="GO:0030955">
    <property type="term" value="F:potassium ion binding"/>
    <property type="evidence" value="ECO:0007669"/>
    <property type="project" value="UniProtKB-UniRule"/>
</dbReference>
<dbReference type="HAMAP" id="MF_00275">
    <property type="entry name" value="KdpA"/>
    <property type="match status" value="1"/>
</dbReference>
<dbReference type="InterPro" id="IPR004623">
    <property type="entry name" value="KdpA"/>
</dbReference>
<dbReference type="NCBIfam" id="TIGR00680">
    <property type="entry name" value="kdpA"/>
    <property type="match status" value="1"/>
</dbReference>
<dbReference type="PANTHER" id="PTHR30607">
    <property type="entry name" value="POTASSIUM-TRANSPORTING ATPASE A CHAIN"/>
    <property type="match status" value="1"/>
</dbReference>
<dbReference type="PANTHER" id="PTHR30607:SF2">
    <property type="entry name" value="POTASSIUM-TRANSPORTING ATPASE POTASSIUM-BINDING SUBUNIT"/>
    <property type="match status" value="1"/>
</dbReference>
<dbReference type="Pfam" id="PF03814">
    <property type="entry name" value="KdpA"/>
    <property type="match status" value="1"/>
</dbReference>
<dbReference type="PIRSF" id="PIRSF001294">
    <property type="entry name" value="K_ATPaseA"/>
    <property type="match status" value="1"/>
</dbReference>
<keyword id="KW-0997">Cell inner membrane</keyword>
<keyword id="KW-1003">Cell membrane</keyword>
<keyword id="KW-0406">Ion transport</keyword>
<keyword id="KW-0472">Membrane</keyword>
<keyword id="KW-0630">Potassium</keyword>
<keyword id="KW-0633">Potassium transport</keyword>
<keyword id="KW-0812">Transmembrane</keyword>
<keyword id="KW-1133">Transmembrane helix</keyword>
<keyword id="KW-0813">Transport</keyword>
<feature type="chain" id="PRO_1000022221" description="Potassium-transporting ATPase potassium-binding subunit">
    <location>
        <begin position="1"/>
        <end position="557"/>
    </location>
</feature>
<feature type="transmembrane region" description="Helical" evidence="1">
    <location>
        <begin position="5"/>
        <end position="25"/>
    </location>
</feature>
<feature type="transmembrane region" description="Helical" evidence="1">
    <location>
        <begin position="63"/>
        <end position="83"/>
    </location>
</feature>
<feature type="transmembrane region" description="Helical" evidence="1">
    <location>
        <begin position="132"/>
        <end position="152"/>
    </location>
</feature>
<feature type="transmembrane region" description="Helical" evidence="1">
    <location>
        <begin position="170"/>
        <end position="190"/>
    </location>
</feature>
<feature type="transmembrane region" description="Helical" evidence="1">
    <location>
        <begin position="253"/>
        <end position="273"/>
    </location>
</feature>
<feature type="transmembrane region" description="Helical" evidence="1">
    <location>
        <begin position="283"/>
        <end position="303"/>
    </location>
</feature>
<feature type="transmembrane region" description="Helical" evidence="1">
    <location>
        <begin position="329"/>
        <end position="349"/>
    </location>
</feature>
<feature type="transmembrane region" description="Helical" evidence="1">
    <location>
        <begin position="356"/>
        <end position="376"/>
    </location>
</feature>
<feature type="transmembrane region" description="Helical" evidence="1">
    <location>
        <begin position="379"/>
        <end position="399"/>
    </location>
</feature>
<feature type="transmembrane region" description="Helical" evidence="1">
    <location>
        <begin position="416"/>
        <end position="436"/>
    </location>
</feature>
<feature type="transmembrane region" description="Helical" evidence="1">
    <location>
        <begin position="484"/>
        <end position="504"/>
    </location>
</feature>
<feature type="transmembrane region" description="Helical" evidence="1">
    <location>
        <begin position="526"/>
        <end position="546"/>
    </location>
</feature>
<proteinExistence type="inferred from homology"/>
<accession>Q1REL9</accession>
<name>KDPA_ECOUT</name>